<name>ACYP_HAHCH</name>
<protein>
    <recommendedName>
        <fullName>Acylphosphatase</fullName>
        <ecNumber>3.6.1.7</ecNumber>
    </recommendedName>
    <alternativeName>
        <fullName>Acylphosphate phosphohydrolase</fullName>
    </alternativeName>
</protein>
<organism>
    <name type="scientific">Hahella chejuensis (strain KCTC 2396)</name>
    <dbReference type="NCBI Taxonomy" id="349521"/>
    <lineage>
        <taxon>Bacteria</taxon>
        <taxon>Pseudomonadati</taxon>
        <taxon>Pseudomonadota</taxon>
        <taxon>Gammaproteobacteria</taxon>
        <taxon>Oceanospirillales</taxon>
        <taxon>Hahellaceae</taxon>
        <taxon>Hahella</taxon>
    </lineage>
</organism>
<proteinExistence type="inferred from homology"/>
<sequence length="94" mass="10571">MKVQDKQHIRAWVSGKVQGVWYRNSTRQVAERLHVLGYAKNLPDGRVEVLAYGDTEAVNQLIDWLHDGPEAAIVTEVKTKQVEGETPPLGFEVC</sequence>
<comment type="catalytic activity">
    <reaction>
        <text>an acyl phosphate + H2O = a carboxylate + phosphate + H(+)</text>
        <dbReference type="Rhea" id="RHEA:14965"/>
        <dbReference type="ChEBI" id="CHEBI:15377"/>
        <dbReference type="ChEBI" id="CHEBI:15378"/>
        <dbReference type="ChEBI" id="CHEBI:29067"/>
        <dbReference type="ChEBI" id="CHEBI:43474"/>
        <dbReference type="ChEBI" id="CHEBI:59918"/>
        <dbReference type="EC" id="3.6.1.7"/>
    </reaction>
</comment>
<comment type="similarity">
    <text evidence="2">Belongs to the acylphosphatase family.</text>
</comment>
<accession>Q2SDN9</accession>
<reference key="1">
    <citation type="journal article" date="2005" name="Nucleic Acids Res.">
        <title>Genomic blueprint of Hahella chejuensis, a marine microbe producing an algicidal agent.</title>
        <authorList>
            <person name="Jeong H."/>
            <person name="Yim J.H."/>
            <person name="Lee C."/>
            <person name="Choi S.-H."/>
            <person name="Park Y.K."/>
            <person name="Yoon S.H."/>
            <person name="Hur C.-G."/>
            <person name="Kang H.-Y."/>
            <person name="Kim D."/>
            <person name="Lee H.H."/>
            <person name="Park K.H."/>
            <person name="Park S.-H."/>
            <person name="Park H.-S."/>
            <person name="Lee H.K."/>
            <person name="Oh T.K."/>
            <person name="Kim J.F."/>
        </authorList>
    </citation>
    <scope>NUCLEOTIDE SEQUENCE [LARGE SCALE GENOMIC DNA]</scope>
    <source>
        <strain>KCTC 2396</strain>
    </source>
</reference>
<evidence type="ECO:0000255" key="1">
    <source>
        <dbReference type="PROSITE-ProRule" id="PRU00520"/>
    </source>
</evidence>
<evidence type="ECO:0000305" key="2"/>
<keyword id="KW-0378">Hydrolase</keyword>
<keyword id="KW-1185">Reference proteome</keyword>
<dbReference type="EC" id="3.6.1.7"/>
<dbReference type="EMBL" id="CP000155">
    <property type="protein sequence ID" value="ABC31235.1"/>
    <property type="molecule type" value="Genomic_DNA"/>
</dbReference>
<dbReference type="RefSeq" id="WP_011398302.1">
    <property type="nucleotide sequence ID" value="NC_007645.1"/>
</dbReference>
<dbReference type="SMR" id="Q2SDN9"/>
<dbReference type="STRING" id="349521.HCH_04535"/>
<dbReference type="KEGG" id="hch:HCH_04535"/>
<dbReference type="eggNOG" id="COG1254">
    <property type="taxonomic scope" value="Bacteria"/>
</dbReference>
<dbReference type="HOGENOM" id="CLU_141932_1_0_6"/>
<dbReference type="OrthoDB" id="5295388at2"/>
<dbReference type="Proteomes" id="UP000000238">
    <property type="component" value="Chromosome"/>
</dbReference>
<dbReference type="GO" id="GO:0003998">
    <property type="term" value="F:acylphosphatase activity"/>
    <property type="evidence" value="ECO:0007669"/>
    <property type="project" value="UniProtKB-EC"/>
</dbReference>
<dbReference type="Gene3D" id="3.30.70.100">
    <property type="match status" value="1"/>
</dbReference>
<dbReference type="InterPro" id="IPR020456">
    <property type="entry name" value="Acylphosphatase"/>
</dbReference>
<dbReference type="InterPro" id="IPR001792">
    <property type="entry name" value="Acylphosphatase-like_dom"/>
</dbReference>
<dbReference type="InterPro" id="IPR036046">
    <property type="entry name" value="Acylphosphatase-like_dom_sf"/>
</dbReference>
<dbReference type="InterPro" id="IPR017968">
    <property type="entry name" value="Acylphosphatase_CS"/>
</dbReference>
<dbReference type="PANTHER" id="PTHR47268">
    <property type="entry name" value="ACYLPHOSPHATASE"/>
    <property type="match status" value="1"/>
</dbReference>
<dbReference type="PANTHER" id="PTHR47268:SF4">
    <property type="entry name" value="ACYLPHOSPHATASE"/>
    <property type="match status" value="1"/>
</dbReference>
<dbReference type="Pfam" id="PF00708">
    <property type="entry name" value="Acylphosphatase"/>
    <property type="match status" value="1"/>
</dbReference>
<dbReference type="SUPFAM" id="SSF54975">
    <property type="entry name" value="Acylphosphatase/BLUF domain-like"/>
    <property type="match status" value="1"/>
</dbReference>
<dbReference type="PROSITE" id="PS00151">
    <property type="entry name" value="ACYLPHOSPHATASE_2"/>
    <property type="match status" value="1"/>
</dbReference>
<dbReference type="PROSITE" id="PS51160">
    <property type="entry name" value="ACYLPHOSPHATASE_3"/>
    <property type="match status" value="1"/>
</dbReference>
<feature type="chain" id="PRO_0000326720" description="Acylphosphatase">
    <location>
        <begin position="1"/>
        <end position="94"/>
    </location>
</feature>
<feature type="domain" description="Acylphosphatase-like" evidence="1">
    <location>
        <begin position="8"/>
        <end position="94"/>
    </location>
</feature>
<feature type="active site" evidence="1">
    <location>
        <position position="23"/>
    </location>
</feature>
<feature type="active site" evidence="1">
    <location>
        <position position="41"/>
    </location>
</feature>
<gene>
    <name type="primary">acyP</name>
    <name type="ordered locus">HCH_04535</name>
</gene>